<organism>
    <name type="scientific">Schizosaccharomyces pombe (strain 972 / ATCC 24843)</name>
    <name type="common">Fission yeast</name>
    <dbReference type="NCBI Taxonomy" id="284812"/>
    <lineage>
        <taxon>Eukaryota</taxon>
        <taxon>Fungi</taxon>
        <taxon>Dikarya</taxon>
        <taxon>Ascomycota</taxon>
        <taxon>Taphrinomycotina</taxon>
        <taxon>Schizosaccharomycetes</taxon>
        <taxon>Schizosaccharomycetales</taxon>
        <taxon>Schizosaccharomycetaceae</taxon>
        <taxon>Schizosaccharomyces</taxon>
    </lineage>
</organism>
<proteinExistence type="evidence at protein level"/>
<dbReference type="EMBL" id="CU329672">
    <property type="protein sequence ID" value="CAA22488.1"/>
    <property type="molecule type" value="Genomic_DNA"/>
</dbReference>
<dbReference type="PIR" id="T41034">
    <property type="entry name" value="T41034"/>
</dbReference>
<dbReference type="RefSeq" id="NP_588462.1">
    <property type="nucleotide sequence ID" value="NM_001023453.2"/>
</dbReference>
<dbReference type="SMR" id="O94411"/>
<dbReference type="BioGRID" id="275828">
    <property type="interactions" value="4"/>
</dbReference>
<dbReference type="FunCoup" id="O94411">
    <property type="interactions" value="8"/>
</dbReference>
<dbReference type="STRING" id="284812.O94411"/>
<dbReference type="PaxDb" id="4896-SPCC1620.04c.1"/>
<dbReference type="EnsemblFungi" id="SPCC1620.04c.1">
    <property type="protein sequence ID" value="SPCC1620.04c.1:pep"/>
    <property type="gene ID" value="SPCC1620.04c"/>
</dbReference>
<dbReference type="GeneID" id="2539258"/>
<dbReference type="KEGG" id="spo:2539258"/>
<dbReference type="PomBase" id="SPCC1620.04c"/>
<dbReference type="VEuPathDB" id="FungiDB:SPCC1620.04c"/>
<dbReference type="eggNOG" id="KOG0305">
    <property type="taxonomic scope" value="Eukaryota"/>
</dbReference>
<dbReference type="HOGENOM" id="CLU_014831_3_3_1"/>
<dbReference type="InParanoid" id="O94411"/>
<dbReference type="OMA" id="YFYDTFR"/>
<dbReference type="PhylomeDB" id="O94411"/>
<dbReference type="PRO" id="PR:O94411"/>
<dbReference type="Proteomes" id="UP000002485">
    <property type="component" value="Chromosome III"/>
</dbReference>
<dbReference type="GO" id="GO:0005634">
    <property type="term" value="C:nucleus"/>
    <property type="evidence" value="ECO:0007005"/>
    <property type="project" value="PomBase"/>
</dbReference>
<dbReference type="GO" id="GO:0010997">
    <property type="term" value="F:anaphase-promoting complex binding"/>
    <property type="evidence" value="ECO:0000318"/>
    <property type="project" value="GO_Central"/>
</dbReference>
<dbReference type="GO" id="GO:1990757">
    <property type="term" value="F:ubiquitin ligase activator activity"/>
    <property type="evidence" value="ECO:0000318"/>
    <property type="project" value="GO_Central"/>
</dbReference>
<dbReference type="GO" id="GO:0031145">
    <property type="term" value="P:anaphase-promoting complex-dependent catabolic process"/>
    <property type="evidence" value="ECO:0000314"/>
    <property type="project" value="PomBase"/>
</dbReference>
<dbReference type="GO" id="GO:0051321">
    <property type="term" value="P:meiotic cell cycle"/>
    <property type="evidence" value="ECO:0007669"/>
    <property type="project" value="UniProtKB-KW"/>
</dbReference>
<dbReference type="GO" id="GO:1905786">
    <property type="term" value="P:positive regulation of anaphase-promoting complex-dependent catabolic process"/>
    <property type="evidence" value="ECO:0000318"/>
    <property type="project" value="GO_Central"/>
</dbReference>
<dbReference type="FunFam" id="2.130.10.10:FF:000098">
    <property type="entry name" value="WD repeat-containing protein slp1"/>
    <property type="match status" value="1"/>
</dbReference>
<dbReference type="Gene3D" id="2.130.10.10">
    <property type="entry name" value="YVTN repeat-like/Quinoprotein amine dehydrogenase"/>
    <property type="match status" value="1"/>
</dbReference>
<dbReference type="InterPro" id="IPR033010">
    <property type="entry name" value="Cdc20/Fizzy"/>
</dbReference>
<dbReference type="InterPro" id="IPR015943">
    <property type="entry name" value="WD40/YVTN_repeat-like_dom_sf"/>
</dbReference>
<dbReference type="InterPro" id="IPR056150">
    <property type="entry name" value="WD40_CDC20-Fz"/>
</dbReference>
<dbReference type="InterPro" id="IPR036322">
    <property type="entry name" value="WD40_repeat_dom_sf"/>
</dbReference>
<dbReference type="InterPro" id="IPR001680">
    <property type="entry name" value="WD40_rpt"/>
</dbReference>
<dbReference type="PANTHER" id="PTHR19918">
    <property type="entry name" value="CELL DIVISION CYCLE 20 CDC20 FIZZY -RELATED"/>
    <property type="match status" value="1"/>
</dbReference>
<dbReference type="PANTHER" id="PTHR19918:SF5">
    <property type="entry name" value="MEIOSIS-SPECIFIC APC_C ACTIVATOR PROTEIN AMA1"/>
    <property type="match status" value="1"/>
</dbReference>
<dbReference type="Pfam" id="PF24807">
    <property type="entry name" value="WD40_CDC20-Fz"/>
    <property type="match status" value="1"/>
</dbReference>
<dbReference type="SMART" id="SM00320">
    <property type="entry name" value="WD40"/>
    <property type="match status" value="5"/>
</dbReference>
<dbReference type="SUPFAM" id="SSF50978">
    <property type="entry name" value="WD40 repeat-like"/>
    <property type="match status" value="1"/>
</dbReference>
<dbReference type="PROSITE" id="PS50082">
    <property type="entry name" value="WD_REPEATS_2"/>
    <property type="match status" value="1"/>
</dbReference>
<dbReference type="PROSITE" id="PS50294">
    <property type="entry name" value="WD_REPEATS_REGION"/>
    <property type="match status" value="1"/>
</dbReference>
<evidence type="ECO:0000269" key="1">
    <source>
    </source>
</evidence>
<evidence type="ECO:0000269" key="2">
    <source>
    </source>
</evidence>
<evidence type="ECO:0000305" key="3"/>
<protein>
    <recommendedName>
        <fullName>Meiotic fizzy-related protein 2</fullName>
    </recommendedName>
    <alternativeName>
        <fullName>Meiotically up-regulated gene 55 protein</fullName>
    </alternativeName>
</protein>
<feature type="chain" id="PRO_0000300505" description="Meiotic fizzy-related protein 2">
    <location>
        <begin position="1"/>
        <end position="509"/>
    </location>
</feature>
<feature type="repeat" description="WD 1">
    <location>
        <begin position="159"/>
        <end position="196"/>
    </location>
</feature>
<feature type="repeat" description="WD 2">
    <location>
        <begin position="199"/>
        <end position="238"/>
    </location>
</feature>
<feature type="repeat" description="WD 3">
    <location>
        <begin position="242"/>
        <end position="281"/>
    </location>
</feature>
<feature type="repeat" description="WD 4">
    <location>
        <begin position="287"/>
        <end position="326"/>
    </location>
</feature>
<feature type="repeat" description="WD 5">
    <location>
        <begin position="329"/>
        <end position="371"/>
    </location>
</feature>
<feature type="repeat" description="WD 6">
    <location>
        <begin position="437"/>
        <end position="477"/>
    </location>
</feature>
<keyword id="KW-0469">Meiosis</keyword>
<keyword id="KW-0539">Nucleus</keyword>
<keyword id="KW-1185">Reference proteome</keyword>
<keyword id="KW-0677">Repeat</keyword>
<keyword id="KW-0853">WD repeat</keyword>
<gene>
    <name type="primary">mfr2</name>
    <name type="synonym">mug55</name>
    <name type="ORF">SPCC1620.04c</name>
</gene>
<reference key="1">
    <citation type="journal article" date="2002" name="Nature">
        <title>The genome sequence of Schizosaccharomyces pombe.</title>
        <authorList>
            <person name="Wood V."/>
            <person name="Gwilliam R."/>
            <person name="Rajandream M.A."/>
            <person name="Lyne M.H."/>
            <person name="Lyne R."/>
            <person name="Stewart A."/>
            <person name="Sgouros J.G."/>
            <person name="Peat N."/>
            <person name="Hayles J."/>
            <person name="Baker S.G."/>
            <person name="Basham D."/>
            <person name="Bowman S."/>
            <person name="Brooks K."/>
            <person name="Brown D."/>
            <person name="Brown S."/>
            <person name="Chillingworth T."/>
            <person name="Churcher C.M."/>
            <person name="Collins M."/>
            <person name="Connor R."/>
            <person name="Cronin A."/>
            <person name="Davis P."/>
            <person name="Feltwell T."/>
            <person name="Fraser A."/>
            <person name="Gentles S."/>
            <person name="Goble A."/>
            <person name="Hamlin N."/>
            <person name="Harris D.E."/>
            <person name="Hidalgo J."/>
            <person name="Hodgson G."/>
            <person name="Holroyd S."/>
            <person name="Hornsby T."/>
            <person name="Howarth S."/>
            <person name="Huckle E.J."/>
            <person name="Hunt S."/>
            <person name="Jagels K."/>
            <person name="James K.D."/>
            <person name="Jones L."/>
            <person name="Jones M."/>
            <person name="Leather S."/>
            <person name="McDonald S."/>
            <person name="McLean J."/>
            <person name="Mooney P."/>
            <person name="Moule S."/>
            <person name="Mungall K.L."/>
            <person name="Murphy L.D."/>
            <person name="Niblett D."/>
            <person name="Odell C."/>
            <person name="Oliver K."/>
            <person name="O'Neil S."/>
            <person name="Pearson D."/>
            <person name="Quail M.A."/>
            <person name="Rabbinowitsch E."/>
            <person name="Rutherford K.M."/>
            <person name="Rutter S."/>
            <person name="Saunders D."/>
            <person name="Seeger K."/>
            <person name="Sharp S."/>
            <person name="Skelton J."/>
            <person name="Simmonds M.N."/>
            <person name="Squares R."/>
            <person name="Squares S."/>
            <person name="Stevens K."/>
            <person name="Taylor K."/>
            <person name="Taylor R.G."/>
            <person name="Tivey A."/>
            <person name="Walsh S.V."/>
            <person name="Warren T."/>
            <person name="Whitehead S."/>
            <person name="Woodward J.R."/>
            <person name="Volckaert G."/>
            <person name="Aert R."/>
            <person name="Robben J."/>
            <person name="Grymonprez B."/>
            <person name="Weltjens I."/>
            <person name="Vanstreels E."/>
            <person name="Rieger M."/>
            <person name="Schaefer M."/>
            <person name="Mueller-Auer S."/>
            <person name="Gabel C."/>
            <person name="Fuchs M."/>
            <person name="Duesterhoeft A."/>
            <person name="Fritzc C."/>
            <person name="Holzer E."/>
            <person name="Moestl D."/>
            <person name="Hilbert H."/>
            <person name="Borzym K."/>
            <person name="Langer I."/>
            <person name="Beck A."/>
            <person name="Lehrach H."/>
            <person name="Reinhardt R."/>
            <person name="Pohl T.M."/>
            <person name="Eger P."/>
            <person name="Zimmermann W."/>
            <person name="Wedler H."/>
            <person name="Wambutt R."/>
            <person name="Purnelle B."/>
            <person name="Goffeau A."/>
            <person name="Cadieu E."/>
            <person name="Dreano S."/>
            <person name="Gloux S."/>
            <person name="Lelaure V."/>
            <person name="Mottier S."/>
            <person name="Galibert F."/>
            <person name="Aves S.J."/>
            <person name="Xiang Z."/>
            <person name="Hunt C."/>
            <person name="Moore K."/>
            <person name="Hurst S.M."/>
            <person name="Lucas M."/>
            <person name="Rochet M."/>
            <person name="Gaillardin C."/>
            <person name="Tallada V.A."/>
            <person name="Garzon A."/>
            <person name="Thode G."/>
            <person name="Daga R.R."/>
            <person name="Cruzado L."/>
            <person name="Jimenez J."/>
            <person name="Sanchez M."/>
            <person name="del Rey F."/>
            <person name="Benito J."/>
            <person name="Dominguez A."/>
            <person name="Revuelta J.L."/>
            <person name="Moreno S."/>
            <person name="Armstrong J."/>
            <person name="Forsburg S.L."/>
            <person name="Cerutti L."/>
            <person name="Lowe T."/>
            <person name="McCombie W.R."/>
            <person name="Paulsen I."/>
            <person name="Potashkin J."/>
            <person name="Shpakovski G.V."/>
            <person name="Ussery D."/>
            <person name="Barrell B.G."/>
            <person name="Nurse P."/>
        </authorList>
    </citation>
    <scope>NUCLEOTIDE SEQUENCE [LARGE SCALE GENOMIC DNA]</scope>
    <source>
        <strain>972 / ATCC 24843</strain>
    </source>
</reference>
<reference key="2">
    <citation type="journal article" date="2005" name="Curr. Biol.">
        <title>A large-scale screen in S. pombe identifies seven novel genes required for critical meiotic events.</title>
        <authorList>
            <person name="Martin-Castellanos C."/>
            <person name="Blanco M."/>
            <person name="Rozalen A.E."/>
            <person name="Perez-Hidalgo L."/>
            <person name="Garcia A.I."/>
            <person name="Conde F."/>
            <person name="Mata J."/>
            <person name="Ellermeier C."/>
            <person name="Davis L."/>
            <person name="San-Segundo P."/>
            <person name="Smith G.R."/>
            <person name="Moreno S."/>
        </authorList>
    </citation>
    <scope>FUNCTION IN MEIOSIS</scope>
</reference>
<reference key="3">
    <citation type="journal article" date="2006" name="Nat. Biotechnol.">
        <title>ORFeome cloning and global analysis of protein localization in the fission yeast Schizosaccharomyces pombe.</title>
        <authorList>
            <person name="Matsuyama A."/>
            <person name="Arai R."/>
            <person name="Yashiroda Y."/>
            <person name="Shirai A."/>
            <person name="Kamata A."/>
            <person name="Sekido S."/>
            <person name="Kobayashi Y."/>
            <person name="Hashimoto A."/>
            <person name="Hamamoto M."/>
            <person name="Hiraoka Y."/>
            <person name="Horinouchi S."/>
            <person name="Yoshida M."/>
        </authorList>
    </citation>
    <scope>SUBCELLULAR LOCATION [LARGE SCALE ANALYSIS]</scope>
</reference>
<comment type="function">
    <text evidence="1">Has a role in meiosis.</text>
</comment>
<comment type="subcellular location">
    <subcellularLocation>
        <location evidence="2">Nucleus</location>
    </subcellularLocation>
</comment>
<comment type="similarity">
    <text evidence="3">Belongs to the WD repeat CDC20/Fizzy family.</text>
</comment>
<accession>O94411</accession>
<name>MFR2_SCHPO</name>
<sequence>MIIKKKESFKSPGRLWRVTKIRKLTAAKKNELQNRKCNQASNEEKKILYKSNFLDRFIPSKANSDAFRIMENAFTEKLNTQESLLPDILNLNVKGVLHYKDNKKQKTTRLIESTNYQRQTIHGASSSLVIEVEENGHLSNMQGSLYETPLRILDAPGLLDDFYISPLAWSTNGELAVALAQNVYLWSEISGPSIMELSPTTYEVSSLAYSSDGGFLAIARVNGFVEIWNRKTKNNRCDYKFHHDGDISCMAWSPINWTLLVGGSTGNIYVYRRTKSMMRRVHTIKKVHQEQVCGLEWNYDGTQFASGGNDNLVCIFDIDSLENKKFYWIHLAAVKALAFCPWQKSLLAVGTGSNDQQIYFYDTFRGHRIHSLFCGAQVTSVIWSRRYKEFCYSLGYSPEGTNSSLIVYRWPQLTKVFDIPSAAIDGWGQDLRTIMAIHTHRKYSNNTWEEGEYVVVANSDETVKFYKIWGNEMQEIHNDRVLYREGIFGSHILEMLENIPEQVLTNGVR</sequence>